<evidence type="ECO:0000255" key="1">
    <source>
        <dbReference type="HAMAP-Rule" id="MF_01014"/>
    </source>
</evidence>
<organism>
    <name type="scientific">Chlorobium luteolum (strain DSM 273 / BCRC 81028 / 2530)</name>
    <name type="common">Pelodictyon luteolum</name>
    <dbReference type="NCBI Taxonomy" id="319225"/>
    <lineage>
        <taxon>Bacteria</taxon>
        <taxon>Pseudomonadati</taxon>
        <taxon>Chlorobiota</taxon>
        <taxon>Chlorobiia</taxon>
        <taxon>Chlorobiales</taxon>
        <taxon>Chlorobiaceae</taxon>
        <taxon>Chlorobium/Pelodictyon group</taxon>
        <taxon>Pelodictyon</taxon>
    </lineage>
</organism>
<dbReference type="EC" id="5.3.1.16" evidence="1"/>
<dbReference type="EMBL" id="CP000096">
    <property type="protein sequence ID" value="ABB24544.1"/>
    <property type="molecule type" value="Genomic_DNA"/>
</dbReference>
<dbReference type="RefSeq" id="WP_011358416.1">
    <property type="nucleotide sequence ID" value="NC_007512.1"/>
</dbReference>
<dbReference type="SMR" id="Q3B287"/>
<dbReference type="STRING" id="319225.Plut_1690"/>
<dbReference type="KEGG" id="plt:Plut_1690"/>
<dbReference type="eggNOG" id="COG0106">
    <property type="taxonomic scope" value="Bacteria"/>
</dbReference>
<dbReference type="HOGENOM" id="CLU_048577_1_1_10"/>
<dbReference type="OrthoDB" id="9807749at2"/>
<dbReference type="UniPathway" id="UPA00031">
    <property type="reaction ID" value="UER00009"/>
</dbReference>
<dbReference type="Proteomes" id="UP000002709">
    <property type="component" value="Chromosome"/>
</dbReference>
<dbReference type="GO" id="GO:0005737">
    <property type="term" value="C:cytoplasm"/>
    <property type="evidence" value="ECO:0007669"/>
    <property type="project" value="UniProtKB-SubCell"/>
</dbReference>
<dbReference type="GO" id="GO:0003949">
    <property type="term" value="F:1-(5-phosphoribosyl)-5-[(5-phosphoribosylamino)methylideneamino]imidazole-4-carboxamide isomerase activity"/>
    <property type="evidence" value="ECO:0007669"/>
    <property type="project" value="UniProtKB-UniRule"/>
</dbReference>
<dbReference type="GO" id="GO:0000105">
    <property type="term" value="P:L-histidine biosynthetic process"/>
    <property type="evidence" value="ECO:0007669"/>
    <property type="project" value="UniProtKB-UniRule"/>
</dbReference>
<dbReference type="GO" id="GO:0000162">
    <property type="term" value="P:L-tryptophan biosynthetic process"/>
    <property type="evidence" value="ECO:0007669"/>
    <property type="project" value="TreeGrafter"/>
</dbReference>
<dbReference type="CDD" id="cd04732">
    <property type="entry name" value="HisA"/>
    <property type="match status" value="1"/>
</dbReference>
<dbReference type="FunFam" id="3.20.20.70:FF:000009">
    <property type="entry name" value="1-(5-phosphoribosyl)-5-[(5-phosphoribosylamino)methylideneamino] imidazole-4-carboxamide isomerase"/>
    <property type="match status" value="1"/>
</dbReference>
<dbReference type="Gene3D" id="3.20.20.70">
    <property type="entry name" value="Aldolase class I"/>
    <property type="match status" value="1"/>
</dbReference>
<dbReference type="HAMAP" id="MF_01014">
    <property type="entry name" value="HisA"/>
    <property type="match status" value="1"/>
</dbReference>
<dbReference type="InterPro" id="IPR013785">
    <property type="entry name" value="Aldolase_TIM"/>
</dbReference>
<dbReference type="InterPro" id="IPR006062">
    <property type="entry name" value="His_biosynth"/>
</dbReference>
<dbReference type="InterPro" id="IPR006063">
    <property type="entry name" value="HisA_bact_arch"/>
</dbReference>
<dbReference type="InterPro" id="IPR044524">
    <property type="entry name" value="Isoase_HisA-like"/>
</dbReference>
<dbReference type="InterPro" id="IPR023016">
    <property type="entry name" value="Isoase_HisA-like_bact"/>
</dbReference>
<dbReference type="InterPro" id="IPR011060">
    <property type="entry name" value="RibuloseP-bd_barrel"/>
</dbReference>
<dbReference type="NCBIfam" id="TIGR00007">
    <property type="entry name" value="1-(5-phosphoribosyl)-5-[(5-phosphoribosylamino)methylideneamino]imidazole-4-carboxamide isomerase"/>
    <property type="match status" value="1"/>
</dbReference>
<dbReference type="PANTHER" id="PTHR43090">
    <property type="entry name" value="1-(5-PHOSPHORIBOSYL)-5-[(5-PHOSPHORIBOSYLAMINO)METHYLIDENEAMINO] IMIDAZOLE-4-CARBOXAMIDE ISOMERASE"/>
    <property type="match status" value="1"/>
</dbReference>
<dbReference type="PANTHER" id="PTHR43090:SF2">
    <property type="entry name" value="1-(5-PHOSPHORIBOSYL)-5-[(5-PHOSPHORIBOSYLAMINO)METHYLIDENEAMINO] IMIDAZOLE-4-CARBOXAMIDE ISOMERASE"/>
    <property type="match status" value="1"/>
</dbReference>
<dbReference type="Pfam" id="PF00977">
    <property type="entry name" value="His_biosynth"/>
    <property type="match status" value="1"/>
</dbReference>
<dbReference type="SUPFAM" id="SSF51366">
    <property type="entry name" value="Ribulose-phoshate binding barrel"/>
    <property type="match status" value="1"/>
</dbReference>
<feature type="chain" id="PRO_0000229068" description="1-(5-phosphoribosyl)-5-[(5-phosphoribosylamino)methylideneamino] imidazole-4-carboxamide isomerase">
    <location>
        <begin position="1"/>
        <end position="256"/>
    </location>
</feature>
<feature type="active site" description="Proton acceptor" evidence="1">
    <location>
        <position position="8"/>
    </location>
</feature>
<feature type="active site" description="Proton donor" evidence="1">
    <location>
        <position position="130"/>
    </location>
</feature>
<gene>
    <name evidence="1" type="primary">hisA</name>
    <name type="ordered locus">Plut_1690</name>
</gene>
<keyword id="KW-0028">Amino-acid biosynthesis</keyword>
<keyword id="KW-0963">Cytoplasm</keyword>
<keyword id="KW-0368">Histidine biosynthesis</keyword>
<keyword id="KW-0413">Isomerase</keyword>
<keyword id="KW-1185">Reference proteome</keyword>
<comment type="catalytic activity">
    <reaction evidence="1">
        <text>1-(5-phospho-beta-D-ribosyl)-5-[(5-phospho-beta-D-ribosylamino)methylideneamino]imidazole-4-carboxamide = 5-[(5-phospho-1-deoxy-D-ribulos-1-ylimino)methylamino]-1-(5-phospho-beta-D-ribosyl)imidazole-4-carboxamide</text>
        <dbReference type="Rhea" id="RHEA:15469"/>
        <dbReference type="ChEBI" id="CHEBI:58435"/>
        <dbReference type="ChEBI" id="CHEBI:58525"/>
        <dbReference type="EC" id="5.3.1.16"/>
    </reaction>
</comment>
<comment type="pathway">
    <text evidence="1">Amino-acid biosynthesis; L-histidine biosynthesis; L-histidine from 5-phospho-alpha-D-ribose 1-diphosphate: step 4/9.</text>
</comment>
<comment type="subcellular location">
    <subcellularLocation>
        <location evidence="1">Cytoplasm</location>
    </subcellularLocation>
</comment>
<comment type="similarity">
    <text evidence="1">Belongs to the HisA/HisF family.</text>
</comment>
<protein>
    <recommendedName>
        <fullName evidence="1">1-(5-phosphoribosyl)-5-[(5-phosphoribosylamino)methylideneamino] imidazole-4-carboxamide isomerase</fullName>
        <ecNumber evidence="1">5.3.1.16</ecNumber>
    </recommendedName>
    <alternativeName>
        <fullName evidence="1">Phosphoribosylformimino-5-aminoimidazole carboxamide ribotide isomerase</fullName>
    </alternativeName>
</protein>
<accession>Q3B287</accession>
<sequence>MLIIPAIDIKDGKCVRLTRGDFSQQKIYLDNPLDMAIIWRKQNAKMLHIVDLDAALTGEMVNFERIRQIVEELDIPVQVGGGIRSADDVKRYLDMGVGRVVIGSAAVTNPELVRELMKTWRASKIVVGIDAVNGVPKIKGWTESANLKDFELAQRMKDMGIERIIYTDITRDGMLQGVGYETTRRFAELAGMKVTASGGVTNSEDLRRLAGLQYCGVDSVIIGKAFYECNFPCQELWYNFEEGICLDHNFSTARKR</sequence>
<reference key="1">
    <citation type="submission" date="2005-08" db="EMBL/GenBank/DDBJ databases">
        <title>Complete sequence of Pelodictyon luteolum DSM 273.</title>
        <authorList>
            <consortium name="US DOE Joint Genome Institute"/>
            <person name="Copeland A."/>
            <person name="Lucas S."/>
            <person name="Lapidus A."/>
            <person name="Barry K."/>
            <person name="Detter J.C."/>
            <person name="Glavina T."/>
            <person name="Hammon N."/>
            <person name="Israni S."/>
            <person name="Pitluck S."/>
            <person name="Bryant D."/>
            <person name="Schmutz J."/>
            <person name="Larimer F."/>
            <person name="Land M."/>
            <person name="Kyrpides N."/>
            <person name="Ivanova N."/>
            <person name="Richardson P."/>
        </authorList>
    </citation>
    <scope>NUCLEOTIDE SEQUENCE [LARGE SCALE GENOMIC DNA]</scope>
    <source>
        <strain>DSM 273 / BCRC 81028 / 2530</strain>
    </source>
</reference>
<name>HIS4_CHLL3</name>
<proteinExistence type="inferred from homology"/>